<reference key="1">
    <citation type="submission" date="2005-10" db="EMBL/GenBank/DDBJ databases">
        <authorList>
            <consortium name="NIH - Mammalian Gene Collection (MGC) project"/>
        </authorList>
    </citation>
    <scope>NUCLEOTIDE SEQUENCE [LARGE SCALE MRNA]</scope>
    <source>
        <strain>Crossbred X Angus</strain>
        <tissue>Ileum</tissue>
    </source>
</reference>
<reference key="2">
    <citation type="journal article" date="2000" name="Biochem. Biophys. Res. Commun.">
        <title>Myoneurin, a novel member of the BTB/POZ-zinc finger family highly expressed in human muscle.</title>
        <authorList>
            <person name="Alliel P.M."/>
            <person name="Seddiqi N."/>
            <person name="Goudou D."/>
            <person name="Cifuentes-Diaz C."/>
            <person name="Romero N."/>
            <person name="Velasco E."/>
            <person name="Rieger F."/>
            <person name="Perin J.-P."/>
        </authorList>
    </citation>
    <scope>NUCLEOTIDE SEQUENCE [MRNA] OF 114-312</scope>
    <source>
        <tissue>Lung</tissue>
    </source>
</reference>
<accession>Q3B7N9</accession>
<accession>Q7YS83</accession>
<organism>
    <name type="scientific">Bos taurus</name>
    <name type="common">Bovine</name>
    <dbReference type="NCBI Taxonomy" id="9913"/>
    <lineage>
        <taxon>Eukaryota</taxon>
        <taxon>Metazoa</taxon>
        <taxon>Chordata</taxon>
        <taxon>Craniata</taxon>
        <taxon>Vertebrata</taxon>
        <taxon>Euteleostomi</taxon>
        <taxon>Mammalia</taxon>
        <taxon>Eutheria</taxon>
        <taxon>Laurasiatheria</taxon>
        <taxon>Artiodactyla</taxon>
        <taxon>Ruminantia</taxon>
        <taxon>Pecora</taxon>
        <taxon>Bovidae</taxon>
        <taxon>Bovinae</taxon>
        <taxon>Bos</taxon>
    </lineage>
</organism>
<dbReference type="EMBL" id="BC107525">
    <property type="protein sequence ID" value="AAI07526.1"/>
    <property type="molecule type" value="mRNA"/>
</dbReference>
<dbReference type="EMBL" id="AY290824">
    <property type="protein sequence ID" value="AAP42826.1"/>
    <property type="molecule type" value="Genomic_DNA"/>
</dbReference>
<dbReference type="RefSeq" id="NP_001030501.1">
    <property type="nucleotide sequence ID" value="NM_001035424.2"/>
</dbReference>
<dbReference type="RefSeq" id="XP_005201752.1">
    <property type="nucleotide sequence ID" value="XM_005201695.5"/>
</dbReference>
<dbReference type="SMR" id="Q3B7N9"/>
<dbReference type="FunCoup" id="Q3B7N9">
    <property type="interactions" value="2577"/>
</dbReference>
<dbReference type="STRING" id="9913.ENSBTAP00000042339"/>
<dbReference type="PaxDb" id="9913-ENSBTAP00000042339"/>
<dbReference type="Ensembl" id="ENSBTAT00000044888.2">
    <property type="protein sequence ID" value="ENSBTAP00000042339.1"/>
    <property type="gene ID" value="ENSBTAG00000013142.7"/>
</dbReference>
<dbReference type="GeneID" id="539376"/>
<dbReference type="KEGG" id="bta:539376"/>
<dbReference type="CTD" id="55892"/>
<dbReference type="VEuPathDB" id="HostDB:ENSBTAG00000013142"/>
<dbReference type="VGNC" id="VGNC:53589">
    <property type="gene designation" value="MYNN"/>
</dbReference>
<dbReference type="eggNOG" id="KOG1721">
    <property type="taxonomic scope" value="Eukaryota"/>
</dbReference>
<dbReference type="GeneTree" id="ENSGT00940000161266"/>
<dbReference type="HOGENOM" id="CLU_022540_1_0_1"/>
<dbReference type="InParanoid" id="Q3B7N9"/>
<dbReference type="OMA" id="RPICNIC"/>
<dbReference type="OrthoDB" id="8117402at2759"/>
<dbReference type="TreeFam" id="TF330787"/>
<dbReference type="Proteomes" id="UP000009136">
    <property type="component" value="Chromosome 1"/>
</dbReference>
<dbReference type="Bgee" id="ENSBTAG00000013142">
    <property type="expression patterns" value="Expressed in neutrophil and 108 other cell types or tissues"/>
</dbReference>
<dbReference type="GO" id="GO:0005654">
    <property type="term" value="C:nucleoplasm"/>
    <property type="evidence" value="ECO:0000318"/>
    <property type="project" value="GO_Central"/>
</dbReference>
<dbReference type="GO" id="GO:0001227">
    <property type="term" value="F:DNA-binding transcription repressor activity, RNA polymerase II-specific"/>
    <property type="evidence" value="ECO:0000318"/>
    <property type="project" value="GO_Central"/>
</dbReference>
<dbReference type="GO" id="GO:0000978">
    <property type="term" value="F:RNA polymerase II cis-regulatory region sequence-specific DNA binding"/>
    <property type="evidence" value="ECO:0000318"/>
    <property type="project" value="GO_Central"/>
</dbReference>
<dbReference type="GO" id="GO:0008270">
    <property type="term" value="F:zinc ion binding"/>
    <property type="evidence" value="ECO:0007669"/>
    <property type="project" value="UniProtKB-KW"/>
</dbReference>
<dbReference type="GO" id="GO:0000122">
    <property type="term" value="P:negative regulation of transcription by RNA polymerase II"/>
    <property type="evidence" value="ECO:0000318"/>
    <property type="project" value="GO_Central"/>
</dbReference>
<dbReference type="GO" id="GO:0001817">
    <property type="term" value="P:regulation of cytokine production"/>
    <property type="evidence" value="ECO:0000318"/>
    <property type="project" value="GO_Central"/>
</dbReference>
<dbReference type="GO" id="GO:0002682">
    <property type="term" value="P:regulation of immune system process"/>
    <property type="evidence" value="ECO:0000318"/>
    <property type="project" value="GO_Central"/>
</dbReference>
<dbReference type="CDD" id="cd18217">
    <property type="entry name" value="BTB_POZ_ZBTB31_myoneurin"/>
    <property type="match status" value="1"/>
</dbReference>
<dbReference type="FunFam" id="3.30.160.60:FF:000029">
    <property type="entry name" value="GLI family zinc finger 4"/>
    <property type="match status" value="1"/>
</dbReference>
<dbReference type="FunFam" id="3.30.160.60:FF:000678">
    <property type="entry name" value="Myoneurin isoform X1"/>
    <property type="match status" value="1"/>
</dbReference>
<dbReference type="FunFam" id="3.30.160.60:FF:000472">
    <property type="entry name" value="myoneurin isoform X1"/>
    <property type="match status" value="1"/>
</dbReference>
<dbReference type="FunFam" id="3.30.160.60:FF:000816">
    <property type="entry name" value="myoneurin isoform X1"/>
    <property type="match status" value="1"/>
</dbReference>
<dbReference type="FunFam" id="3.30.160.60:FF:000871">
    <property type="entry name" value="myoneurin isoform X1"/>
    <property type="match status" value="1"/>
</dbReference>
<dbReference type="FunFam" id="3.30.160.60:FF:001185">
    <property type="entry name" value="myoneurin isoform X1"/>
    <property type="match status" value="1"/>
</dbReference>
<dbReference type="FunFam" id="3.30.710.10:FF:000051">
    <property type="entry name" value="myoneurin isoform X1"/>
    <property type="match status" value="1"/>
</dbReference>
<dbReference type="FunFam" id="3.30.160.60:FF:002586">
    <property type="entry name" value="Zinc finger protein 787"/>
    <property type="match status" value="1"/>
</dbReference>
<dbReference type="Gene3D" id="3.30.160.60">
    <property type="entry name" value="Classic Zinc Finger"/>
    <property type="match status" value="7"/>
</dbReference>
<dbReference type="Gene3D" id="3.30.710.10">
    <property type="entry name" value="Potassium Channel Kv1.1, Chain A"/>
    <property type="match status" value="1"/>
</dbReference>
<dbReference type="InterPro" id="IPR000210">
    <property type="entry name" value="BTB/POZ_dom"/>
</dbReference>
<dbReference type="InterPro" id="IPR011333">
    <property type="entry name" value="SKP1/BTB/POZ_sf"/>
</dbReference>
<dbReference type="InterPro" id="IPR036236">
    <property type="entry name" value="Znf_C2H2_sf"/>
</dbReference>
<dbReference type="InterPro" id="IPR013087">
    <property type="entry name" value="Znf_C2H2_type"/>
</dbReference>
<dbReference type="InterPro" id="IPR050457">
    <property type="entry name" value="ZnFinger_BTB_dom_contain"/>
</dbReference>
<dbReference type="PANTHER" id="PTHR46105">
    <property type="entry name" value="AGAP004733-PA"/>
    <property type="match status" value="1"/>
</dbReference>
<dbReference type="PANTHER" id="PTHR46105:SF5">
    <property type="entry name" value="ZINC FINGER AND BTB DOMAIN-CONTAINING PROTEIN 44 ISOFORM X1"/>
    <property type="match status" value="1"/>
</dbReference>
<dbReference type="Pfam" id="PF00651">
    <property type="entry name" value="BTB"/>
    <property type="match status" value="1"/>
</dbReference>
<dbReference type="Pfam" id="PF00096">
    <property type="entry name" value="zf-C2H2"/>
    <property type="match status" value="5"/>
</dbReference>
<dbReference type="Pfam" id="PF13912">
    <property type="entry name" value="zf-C2H2_6"/>
    <property type="match status" value="1"/>
</dbReference>
<dbReference type="SMART" id="SM00225">
    <property type="entry name" value="BTB"/>
    <property type="match status" value="1"/>
</dbReference>
<dbReference type="SMART" id="SM00355">
    <property type="entry name" value="ZnF_C2H2"/>
    <property type="match status" value="7"/>
</dbReference>
<dbReference type="SUPFAM" id="SSF57667">
    <property type="entry name" value="beta-beta-alpha zinc fingers"/>
    <property type="match status" value="4"/>
</dbReference>
<dbReference type="SUPFAM" id="SSF54695">
    <property type="entry name" value="POZ domain"/>
    <property type="match status" value="1"/>
</dbReference>
<dbReference type="PROSITE" id="PS50097">
    <property type="entry name" value="BTB"/>
    <property type="match status" value="1"/>
</dbReference>
<dbReference type="PROSITE" id="PS00028">
    <property type="entry name" value="ZINC_FINGER_C2H2_1"/>
    <property type="match status" value="7"/>
</dbReference>
<dbReference type="PROSITE" id="PS50157">
    <property type="entry name" value="ZINC_FINGER_C2H2_2"/>
    <property type="match status" value="7"/>
</dbReference>
<sequence>MQYSHHCEHLLERLNKQREAGFLCDCTIVIGEFQFKAHRNVLASFSEYFGAIYRSTSENNVFLDQSQVKADGFQKLLEFIYTGTLNLDSWNVKEIHQAADYLKVEEVVTKCKIKMEDFAFIANPSSTEISSITGNIELNQQTCLLTLRDYNSREKSEVSTDLVQANPKQGALAKKSSQTKKKKKAFNSQKTGQNKTVQYPSDILENASVELFLDANKLSTPIIEQVAQRSNSELELTSVVENTFPAQDIVQTVTVKRKRGKSQPNCALKEHSMSNIASVKNSYELESSGEELDQRYSKAKPMCNTCGKVFSEASSLRRHMRIHKGVKPYVCHLCGKAFTQCNQLKTHVRTHTGEKPYKCELCDKGFAQKCQLVFHSRMHHGEEKPYKCDVCNLQFATSSNLKIHARKHSGEKPYVCDRCGQRFAQASTLTYHVRRHTGEKPYVCDTCGKAFAVSSSLITHSRKHTGERPFICELCGNSYTDIKNLKKHKTKVHSGADKILDSSIEDHPLNEQDSIQKSPLSETLDVKPSDVTLPLTLPLGAEDHHLLLPVADSQPPAPDALLRPAANGYSEPQLIFLQQLY</sequence>
<evidence type="ECO:0000250" key="1"/>
<evidence type="ECO:0000250" key="2">
    <source>
        <dbReference type="UniProtKB" id="Q9NPC7"/>
    </source>
</evidence>
<evidence type="ECO:0000255" key="3"/>
<evidence type="ECO:0000255" key="4">
    <source>
        <dbReference type="PROSITE-ProRule" id="PRU00037"/>
    </source>
</evidence>
<evidence type="ECO:0000255" key="5">
    <source>
        <dbReference type="PROSITE-ProRule" id="PRU00042"/>
    </source>
</evidence>
<evidence type="ECO:0000256" key="6">
    <source>
        <dbReference type="SAM" id="MobiDB-lite"/>
    </source>
</evidence>
<evidence type="ECO:0000305" key="7"/>
<protein>
    <recommendedName>
        <fullName>Myoneurin</fullName>
    </recommendedName>
</protein>
<name>MYNN_BOVIN</name>
<comment type="subcellular location">
    <subcellularLocation>
        <location evidence="1">Nucleus</location>
    </subcellularLocation>
</comment>
<comment type="similarity">
    <text evidence="7">Belongs to the krueppel C2H2-type zinc-finger protein family.</text>
</comment>
<gene>
    <name type="primary">MYNN</name>
</gene>
<proteinExistence type="evidence at transcript level"/>
<feature type="chain" id="PRO_0000248216" description="Myoneurin">
    <location>
        <begin position="1"/>
        <end position="581"/>
    </location>
</feature>
<feature type="domain" description="BTB" evidence="4">
    <location>
        <begin position="24"/>
        <end position="89"/>
    </location>
</feature>
<feature type="zinc finger region" description="C2H2-type 1" evidence="5">
    <location>
        <begin position="301"/>
        <end position="323"/>
    </location>
</feature>
<feature type="zinc finger region" description="C2H2-type 2" evidence="5">
    <location>
        <begin position="329"/>
        <end position="351"/>
    </location>
</feature>
<feature type="zinc finger region" description="C2H2-type 3" evidence="5">
    <location>
        <begin position="357"/>
        <end position="380"/>
    </location>
</feature>
<feature type="zinc finger region" description="C2H2-type 4" evidence="5">
    <location>
        <begin position="386"/>
        <end position="408"/>
    </location>
</feature>
<feature type="zinc finger region" description="C2H2-type 5" evidence="5">
    <location>
        <begin position="414"/>
        <end position="436"/>
    </location>
</feature>
<feature type="zinc finger region" description="C2H2-type 6" evidence="5">
    <location>
        <begin position="442"/>
        <end position="464"/>
    </location>
</feature>
<feature type="zinc finger region" description="C2H2-type 7" evidence="5">
    <location>
        <begin position="470"/>
        <end position="493"/>
    </location>
</feature>
<feature type="region of interest" description="Disordered" evidence="6">
    <location>
        <begin position="167"/>
        <end position="193"/>
    </location>
</feature>
<feature type="short sequence motif" description="Nuclear localization signal" evidence="3">
    <location>
        <begin position="174"/>
        <end position="190"/>
    </location>
</feature>
<feature type="short sequence motif" description="Nuclear localization signal" evidence="3">
    <location>
        <begin position="256"/>
        <end position="261"/>
    </location>
</feature>
<feature type="modified residue" description="Phosphoserine" evidence="2">
    <location>
        <position position="288"/>
    </location>
</feature>
<feature type="sequence conflict" description="In Ref. 2; AAP42826." evidence="7" ref="2">
    <original>NP</original>
    <variation>KV</variation>
    <location>
        <begin position="166"/>
        <end position="167"/>
    </location>
</feature>
<keyword id="KW-0238">DNA-binding</keyword>
<keyword id="KW-0479">Metal-binding</keyword>
<keyword id="KW-0539">Nucleus</keyword>
<keyword id="KW-0597">Phosphoprotein</keyword>
<keyword id="KW-1185">Reference proteome</keyword>
<keyword id="KW-0677">Repeat</keyword>
<keyword id="KW-0804">Transcription</keyword>
<keyword id="KW-0805">Transcription regulation</keyword>
<keyword id="KW-0862">Zinc</keyword>
<keyword id="KW-0863">Zinc-finger</keyword>